<feature type="chain" id="PRO_0000053659" description="Estrogen receptor gamma">
    <location>
        <begin position="1"/>
        <end position="565"/>
    </location>
</feature>
<feature type="domain" description="NR LBD" evidence="3">
    <location>
        <begin position="286"/>
        <end position="516"/>
    </location>
</feature>
<feature type="DNA-binding region" description="Nuclear receptor" evidence="2">
    <location>
        <begin position="169"/>
        <end position="234"/>
    </location>
</feature>
<feature type="zinc finger region" description="NR C4-type" evidence="2">
    <location>
        <begin position="169"/>
        <end position="189"/>
    </location>
</feature>
<feature type="zinc finger region" description="NR C4-type" evidence="2">
    <location>
        <begin position="205"/>
        <end position="229"/>
    </location>
</feature>
<feature type="region of interest" description="Modulating">
    <location>
        <begin position="1"/>
        <end position="168"/>
    </location>
</feature>
<feature type="region of interest" description="Hinge">
    <location>
        <begin position="235"/>
        <end position="285"/>
    </location>
</feature>
<feature type="region of interest" description="Disordered" evidence="4">
    <location>
        <begin position="522"/>
        <end position="565"/>
    </location>
</feature>
<comment type="function">
    <text>The steroid hormones and their receptors are involved in the regulation of eukaryotic gene expression and affect cellular proliferation and differentiation in target tissues.</text>
</comment>
<comment type="subunit">
    <text evidence="1">Homodimer.</text>
</comment>
<comment type="subcellular location">
    <subcellularLocation>
        <location>Nucleus</location>
    </subcellularLocation>
</comment>
<comment type="tissue specificity">
    <text>Abundant in the ovary and testes, barely detectable in the brain and muscle and undetectable in the liver.</text>
</comment>
<comment type="domain">
    <text>Composed of three domains: a modulating N-terminal domain, a DNA-binding domain and a C-terminal ligand-binding domain.</text>
</comment>
<comment type="similarity">
    <text evidence="5">Belongs to the nuclear hormone receptor family. NR3 subfamily.</text>
</comment>
<proteinExistence type="evidence at transcript level"/>
<name>ESR3_MICUN</name>
<keyword id="KW-0238">DNA-binding</keyword>
<keyword id="KW-0446">Lipid-binding</keyword>
<keyword id="KW-0479">Metal-binding</keyword>
<keyword id="KW-0539">Nucleus</keyword>
<keyword id="KW-0675">Receptor</keyword>
<keyword id="KW-0754">Steroid-binding</keyword>
<keyword id="KW-0804">Transcription</keyword>
<keyword id="KW-0805">Transcription regulation</keyword>
<keyword id="KW-0862">Zinc</keyword>
<keyword id="KW-0863">Zinc-finger</keyword>
<reference key="1">
    <citation type="journal article" date="2000" name="Proc. Natl. Acad. Sci. U.S.A.">
        <title>Identification of a third distinct estrogen receptor and reclassification of estrogen receptors in teleosts.</title>
        <authorList>
            <person name="Hawkins M.B."/>
            <person name="Thornton J.W."/>
            <person name="Crews D."/>
            <person name="Skipper J.K."/>
            <person name="Dotte A."/>
            <person name="Thomas P."/>
        </authorList>
    </citation>
    <scope>NUCLEOTIDE SEQUENCE [MRNA]</scope>
    <source>
        <tissue>Ovary</tissue>
    </source>
</reference>
<protein>
    <recommendedName>
        <fullName>Estrogen receptor gamma</fullName>
        <shortName>ER-gamma</shortName>
    </recommendedName>
    <alternativeName>
        <fullName>Nuclear receptor subfamily 3 group A member 3</fullName>
    </alternativeName>
</protein>
<evidence type="ECO:0000250" key="1"/>
<evidence type="ECO:0000255" key="2">
    <source>
        <dbReference type="PROSITE-ProRule" id="PRU00407"/>
    </source>
</evidence>
<evidence type="ECO:0000255" key="3">
    <source>
        <dbReference type="PROSITE-ProRule" id="PRU01189"/>
    </source>
</evidence>
<evidence type="ECO:0000256" key="4">
    <source>
        <dbReference type="SAM" id="MobiDB-lite"/>
    </source>
</evidence>
<evidence type="ECO:0000305" key="5"/>
<dbReference type="EMBL" id="AF298182">
    <property type="protein sequence ID" value="AAG16712.1"/>
    <property type="molecule type" value="mRNA"/>
</dbReference>
<dbReference type="SMR" id="P57783"/>
<dbReference type="GO" id="GO:0005634">
    <property type="term" value="C:nucleus"/>
    <property type="evidence" value="ECO:0007669"/>
    <property type="project" value="UniProtKB-SubCell"/>
</dbReference>
<dbReference type="GO" id="GO:0042562">
    <property type="term" value="F:hormone binding"/>
    <property type="evidence" value="ECO:0007669"/>
    <property type="project" value="UniProtKB-ARBA"/>
</dbReference>
<dbReference type="GO" id="GO:0030284">
    <property type="term" value="F:nuclear estrogen receptor activity"/>
    <property type="evidence" value="ECO:0007669"/>
    <property type="project" value="InterPro"/>
</dbReference>
<dbReference type="GO" id="GO:0043565">
    <property type="term" value="F:sequence-specific DNA binding"/>
    <property type="evidence" value="ECO:0007669"/>
    <property type="project" value="InterPro"/>
</dbReference>
<dbReference type="GO" id="GO:0005496">
    <property type="term" value="F:steroid binding"/>
    <property type="evidence" value="ECO:0007669"/>
    <property type="project" value="UniProtKB-KW"/>
</dbReference>
<dbReference type="GO" id="GO:0008270">
    <property type="term" value="F:zinc ion binding"/>
    <property type="evidence" value="ECO:0007669"/>
    <property type="project" value="UniProtKB-KW"/>
</dbReference>
<dbReference type="GO" id="GO:0071392">
    <property type="term" value="P:cellular response to estradiol stimulus"/>
    <property type="evidence" value="ECO:0007669"/>
    <property type="project" value="InterPro"/>
</dbReference>
<dbReference type="GO" id="GO:0030520">
    <property type="term" value="P:estrogen receptor signaling pathway"/>
    <property type="evidence" value="ECO:0007669"/>
    <property type="project" value="InterPro"/>
</dbReference>
<dbReference type="CDD" id="cd07171">
    <property type="entry name" value="NR_DBD_ER"/>
    <property type="match status" value="1"/>
</dbReference>
<dbReference type="CDD" id="cd06949">
    <property type="entry name" value="NR_LBD_ER"/>
    <property type="match status" value="1"/>
</dbReference>
<dbReference type="FunFam" id="1.10.565.10:FF:000010">
    <property type="entry name" value="Estrogen receptor"/>
    <property type="match status" value="1"/>
</dbReference>
<dbReference type="FunFam" id="3.30.50.10:FF:000139">
    <property type="entry name" value="Estrogen receptor beta a variant b"/>
    <property type="match status" value="1"/>
</dbReference>
<dbReference type="Gene3D" id="3.30.50.10">
    <property type="entry name" value="Erythroid Transcription Factor GATA-1, subunit A"/>
    <property type="match status" value="1"/>
</dbReference>
<dbReference type="Gene3D" id="1.10.565.10">
    <property type="entry name" value="Retinoid X Receptor"/>
    <property type="match status" value="1"/>
</dbReference>
<dbReference type="InterPro" id="IPR021064">
    <property type="entry name" value="ER-beta-like_N"/>
</dbReference>
<dbReference type="InterPro" id="IPR028355">
    <property type="entry name" value="ER-beta/gamma"/>
</dbReference>
<dbReference type="InterPro" id="IPR024178">
    <property type="entry name" value="Est_rcpt/est-rel_rcp"/>
</dbReference>
<dbReference type="InterPro" id="IPR035500">
    <property type="entry name" value="NHR-like_dom_sf"/>
</dbReference>
<dbReference type="InterPro" id="IPR000536">
    <property type="entry name" value="Nucl_hrmn_rcpt_lig-bd"/>
</dbReference>
<dbReference type="InterPro" id="IPR050200">
    <property type="entry name" value="Nuclear_hormone_rcpt_NR3"/>
</dbReference>
<dbReference type="InterPro" id="IPR001723">
    <property type="entry name" value="Nuclear_hrmn_rcpt"/>
</dbReference>
<dbReference type="InterPro" id="IPR001628">
    <property type="entry name" value="Znf_hrmn_rcpt"/>
</dbReference>
<dbReference type="InterPro" id="IPR013088">
    <property type="entry name" value="Znf_NHR/GATA"/>
</dbReference>
<dbReference type="PANTHER" id="PTHR48092">
    <property type="entry name" value="KNIRPS-RELATED PROTEIN-RELATED"/>
    <property type="match status" value="1"/>
</dbReference>
<dbReference type="Pfam" id="PF12497">
    <property type="entry name" value="ERbeta_N"/>
    <property type="match status" value="1"/>
</dbReference>
<dbReference type="Pfam" id="PF00104">
    <property type="entry name" value="Hormone_recep"/>
    <property type="match status" value="1"/>
</dbReference>
<dbReference type="Pfam" id="PF00105">
    <property type="entry name" value="zf-C4"/>
    <property type="match status" value="1"/>
</dbReference>
<dbReference type="PIRSF" id="PIRSF500102">
    <property type="entry name" value="ER-b"/>
    <property type="match status" value="1"/>
</dbReference>
<dbReference type="PIRSF" id="PIRSF002527">
    <property type="entry name" value="ER-like_NR"/>
    <property type="match status" value="1"/>
</dbReference>
<dbReference type="PRINTS" id="PR00398">
    <property type="entry name" value="STRDHORMONER"/>
</dbReference>
<dbReference type="PRINTS" id="PR00047">
    <property type="entry name" value="STROIDFINGER"/>
</dbReference>
<dbReference type="SMART" id="SM00430">
    <property type="entry name" value="HOLI"/>
    <property type="match status" value="1"/>
</dbReference>
<dbReference type="SMART" id="SM00399">
    <property type="entry name" value="ZnF_C4"/>
    <property type="match status" value="1"/>
</dbReference>
<dbReference type="SUPFAM" id="SSF57716">
    <property type="entry name" value="Glucocorticoid receptor-like (DNA-binding domain)"/>
    <property type="match status" value="1"/>
</dbReference>
<dbReference type="SUPFAM" id="SSF48508">
    <property type="entry name" value="Nuclear receptor ligand-binding domain"/>
    <property type="match status" value="1"/>
</dbReference>
<dbReference type="PROSITE" id="PS51843">
    <property type="entry name" value="NR_LBD"/>
    <property type="match status" value="1"/>
</dbReference>
<dbReference type="PROSITE" id="PS00031">
    <property type="entry name" value="NUCLEAR_REC_DBD_1"/>
    <property type="match status" value="1"/>
</dbReference>
<dbReference type="PROSITE" id="PS51030">
    <property type="entry name" value="NUCLEAR_REC_DBD_2"/>
    <property type="match status" value="1"/>
</dbReference>
<gene>
    <name type="primary">esr3</name>
    <name type="synonym">nr3a3</name>
</gene>
<accession>P57783</accession>
<sequence length="565" mass="62903">MAVASSPEKDQPLLQLQKVDSSRVGGQVLSPTLSSSLETSQPICITSPYTDLGHDFPTIPFYSPTIFSYAGPSISDCTSVHQSLNPSLFWPSRGHMGSPIPLHHSQHGQPIQSPWVEISPLDNVLKTKQDGASLPLAVVPVRHKSARRRSQESEEAVVTSGGKTDLHYCAVCHDYASGYHYGVWSCEGCKAFFKRSIQRDNEYICPATNECTIDKNRRKSCQACRLRKCYEVGMTKCGMRKERGNYRSPQMRRMTRLTSQGRTDSSSVLTGSAVVSLNAPQPSALTSEQLIERLMEAEPPEIYLMKDMKKPLTEAKVMMSLTNLADKELVHMITWAKKIPGFVELGLLDQVHLLECCWLEVLMVGLMWRSVDHPGKLVFSPDLSLSREEGSCVQGFAEIFDMLLAATSRVRELKLQREEYVCLKAMILLNSNMCLSSSESSSKLLRLLDAVTDALVSAIGKTVLSFRQQYTRLAHLLMLLSHIRHVSNKGMDHLHCMKMKNMVPLYDLLLEMLDAHIMHSSRLPRRSPEQEPEDQADAPAPPHSSGSGPSYTWTPSSSEGAGEPQ</sequence>
<organism>
    <name type="scientific">Micropogonias undulatus</name>
    <name type="common">Atlantic croaker</name>
    <dbReference type="NCBI Taxonomy" id="29154"/>
    <lineage>
        <taxon>Eukaryota</taxon>
        <taxon>Metazoa</taxon>
        <taxon>Chordata</taxon>
        <taxon>Craniata</taxon>
        <taxon>Vertebrata</taxon>
        <taxon>Euteleostomi</taxon>
        <taxon>Actinopterygii</taxon>
        <taxon>Neopterygii</taxon>
        <taxon>Teleostei</taxon>
        <taxon>Neoteleostei</taxon>
        <taxon>Acanthomorphata</taxon>
        <taxon>Eupercaria</taxon>
        <taxon>Sciaenidae</taxon>
        <taxon>Micropogonias</taxon>
    </lineage>
</organism>